<accession>A7Y3B3</accession>
<geneLocation type="chloroplast"/>
<evidence type="ECO:0000305" key="1"/>
<protein>
    <recommendedName>
        <fullName evidence="1">Small ribosomal subunit protein uS2c</fullName>
    </recommendedName>
    <alternativeName>
        <fullName>30S ribosomal protein S2, chloroplastic</fullName>
    </alternativeName>
</protein>
<sequence length="236" mass="26621">MTKIYWNINLEEMMEAGVHFGHGTRKWNPKMAPYISAKRKGIHITNLTGTARFLSEACDLVFDAASRGKQFLIVGTKNKAADSVARASIRARCHYVNKKWLGGMLTNWSTTETRLHKFRDLRMEQKMGGLNRLPKRDATILKRQLARLQTYLGGMKYMTGLPDIAIIVDQHKEYTALQECITLGIPTICLIDTNCDPNLSDISIPANDDAISSIRFILNKLVFAICEGRSSYIINP</sequence>
<dbReference type="EMBL" id="EU118126">
    <property type="protein sequence ID" value="ABV02337.1"/>
    <property type="molecule type" value="Genomic_DNA"/>
</dbReference>
<dbReference type="RefSeq" id="YP_001468297.1">
    <property type="nucleotide sequence ID" value="NC_009808.1"/>
</dbReference>
<dbReference type="SMR" id="A7Y3B3"/>
<dbReference type="GeneID" id="5601266"/>
<dbReference type="GO" id="GO:0009507">
    <property type="term" value="C:chloroplast"/>
    <property type="evidence" value="ECO:0007669"/>
    <property type="project" value="UniProtKB-SubCell"/>
</dbReference>
<dbReference type="GO" id="GO:0005763">
    <property type="term" value="C:mitochondrial small ribosomal subunit"/>
    <property type="evidence" value="ECO:0007669"/>
    <property type="project" value="TreeGrafter"/>
</dbReference>
<dbReference type="GO" id="GO:0003735">
    <property type="term" value="F:structural constituent of ribosome"/>
    <property type="evidence" value="ECO:0007669"/>
    <property type="project" value="InterPro"/>
</dbReference>
<dbReference type="GO" id="GO:0006412">
    <property type="term" value="P:translation"/>
    <property type="evidence" value="ECO:0007669"/>
    <property type="project" value="UniProtKB-UniRule"/>
</dbReference>
<dbReference type="CDD" id="cd01425">
    <property type="entry name" value="RPS2"/>
    <property type="match status" value="1"/>
</dbReference>
<dbReference type="FunFam" id="1.10.287.610:FF:000001">
    <property type="entry name" value="30S ribosomal protein S2"/>
    <property type="match status" value="1"/>
</dbReference>
<dbReference type="Gene3D" id="3.40.50.10490">
    <property type="entry name" value="Glucose-6-phosphate isomerase like protein, domain 1"/>
    <property type="match status" value="1"/>
</dbReference>
<dbReference type="Gene3D" id="1.10.287.610">
    <property type="entry name" value="Helix hairpin bin"/>
    <property type="match status" value="1"/>
</dbReference>
<dbReference type="HAMAP" id="MF_00291_B">
    <property type="entry name" value="Ribosomal_uS2_B"/>
    <property type="match status" value="1"/>
</dbReference>
<dbReference type="InterPro" id="IPR001865">
    <property type="entry name" value="Ribosomal_uS2"/>
</dbReference>
<dbReference type="InterPro" id="IPR005706">
    <property type="entry name" value="Ribosomal_uS2_bac/mit/plastid"/>
</dbReference>
<dbReference type="InterPro" id="IPR018130">
    <property type="entry name" value="Ribosomal_uS2_CS"/>
</dbReference>
<dbReference type="InterPro" id="IPR023591">
    <property type="entry name" value="Ribosomal_uS2_flav_dom_sf"/>
</dbReference>
<dbReference type="NCBIfam" id="TIGR01011">
    <property type="entry name" value="rpsB_bact"/>
    <property type="match status" value="1"/>
</dbReference>
<dbReference type="PANTHER" id="PTHR12534">
    <property type="entry name" value="30S RIBOSOMAL PROTEIN S2 PROKARYOTIC AND ORGANELLAR"/>
    <property type="match status" value="1"/>
</dbReference>
<dbReference type="PANTHER" id="PTHR12534:SF0">
    <property type="entry name" value="SMALL RIBOSOMAL SUBUNIT PROTEIN US2M"/>
    <property type="match status" value="1"/>
</dbReference>
<dbReference type="Pfam" id="PF00318">
    <property type="entry name" value="Ribosomal_S2"/>
    <property type="match status" value="1"/>
</dbReference>
<dbReference type="PRINTS" id="PR00395">
    <property type="entry name" value="RIBOSOMALS2"/>
</dbReference>
<dbReference type="SUPFAM" id="SSF52313">
    <property type="entry name" value="Ribosomal protein S2"/>
    <property type="match status" value="1"/>
</dbReference>
<dbReference type="PROSITE" id="PS00962">
    <property type="entry name" value="RIBOSOMAL_S2_1"/>
    <property type="match status" value="1"/>
</dbReference>
<name>RR2_IPOPU</name>
<reference key="1">
    <citation type="journal article" date="2007" name="BMC Plant Biol.">
        <title>Complete plastid genome sequences suggest strong selection for retention of photosynthetic genes in the parasitic plant genus Cuscuta.</title>
        <authorList>
            <person name="McNeal J.R."/>
            <person name="Kuehl J.V."/>
            <person name="Boore J.L."/>
            <person name="dePamphilis C.W."/>
        </authorList>
    </citation>
    <scope>NUCLEOTIDE SEQUENCE [LARGE SCALE GENOMIC DNA]</scope>
</reference>
<comment type="subcellular location">
    <subcellularLocation>
        <location>Plastid</location>
        <location>Chloroplast</location>
    </subcellularLocation>
</comment>
<comment type="similarity">
    <text evidence="1">Belongs to the universal ribosomal protein uS2 family.</text>
</comment>
<organism>
    <name type="scientific">Ipomoea purpurea</name>
    <name type="common">Common morning glory</name>
    <name type="synonym">Pharbitis purpurea</name>
    <dbReference type="NCBI Taxonomy" id="4121"/>
    <lineage>
        <taxon>Eukaryota</taxon>
        <taxon>Viridiplantae</taxon>
        <taxon>Streptophyta</taxon>
        <taxon>Embryophyta</taxon>
        <taxon>Tracheophyta</taxon>
        <taxon>Spermatophyta</taxon>
        <taxon>Magnoliopsida</taxon>
        <taxon>eudicotyledons</taxon>
        <taxon>Gunneridae</taxon>
        <taxon>Pentapetalae</taxon>
        <taxon>asterids</taxon>
        <taxon>lamiids</taxon>
        <taxon>Solanales</taxon>
        <taxon>Convolvulaceae</taxon>
        <taxon>Ipomoeeae</taxon>
        <taxon>Ipomoea</taxon>
    </lineage>
</organism>
<gene>
    <name type="primary">rps2</name>
</gene>
<keyword id="KW-0150">Chloroplast</keyword>
<keyword id="KW-0934">Plastid</keyword>
<keyword id="KW-0687">Ribonucleoprotein</keyword>
<keyword id="KW-0689">Ribosomal protein</keyword>
<proteinExistence type="inferred from homology"/>
<feature type="chain" id="PRO_0000352122" description="Small ribosomal subunit protein uS2c">
    <location>
        <begin position="1"/>
        <end position="236"/>
    </location>
</feature>